<reference key="1">
    <citation type="journal article" date="2004" name="Science">
        <title>The genomic sequence of the accidental pathogen Legionella pneumophila.</title>
        <authorList>
            <person name="Chien M."/>
            <person name="Morozova I."/>
            <person name="Shi S."/>
            <person name="Sheng H."/>
            <person name="Chen J."/>
            <person name="Gomez S.M."/>
            <person name="Asamani G."/>
            <person name="Hill K."/>
            <person name="Nuara J."/>
            <person name="Feder M."/>
            <person name="Rineer J."/>
            <person name="Greenberg J.J."/>
            <person name="Steshenko V."/>
            <person name="Park S.H."/>
            <person name="Zhao B."/>
            <person name="Teplitskaya E."/>
            <person name="Edwards J.R."/>
            <person name="Pampou S."/>
            <person name="Georghiou A."/>
            <person name="Chou I.-C."/>
            <person name="Iannuccilli W."/>
            <person name="Ulz M.E."/>
            <person name="Kim D.H."/>
            <person name="Geringer-Sameth A."/>
            <person name="Goldsberry C."/>
            <person name="Morozov P."/>
            <person name="Fischer S.G."/>
            <person name="Segal G."/>
            <person name="Qu X."/>
            <person name="Rzhetsky A."/>
            <person name="Zhang P."/>
            <person name="Cayanis E."/>
            <person name="De Jong P.J."/>
            <person name="Ju J."/>
            <person name="Kalachikov S."/>
            <person name="Shuman H.A."/>
            <person name="Russo J.J."/>
        </authorList>
    </citation>
    <scope>NUCLEOTIDE SEQUENCE [LARGE SCALE GENOMIC DNA]</scope>
    <source>
        <strain>Philadelphia 1 / ATCC 33152 / DSM 7513</strain>
    </source>
</reference>
<organism>
    <name type="scientific">Legionella pneumophila subsp. pneumophila (strain Philadelphia 1 / ATCC 33152 / DSM 7513)</name>
    <dbReference type="NCBI Taxonomy" id="272624"/>
    <lineage>
        <taxon>Bacteria</taxon>
        <taxon>Pseudomonadati</taxon>
        <taxon>Pseudomonadota</taxon>
        <taxon>Gammaproteobacteria</taxon>
        <taxon>Legionellales</taxon>
        <taxon>Legionellaceae</taxon>
        <taxon>Legionella</taxon>
    </lineage>
</organism>
<accession>Q5ZXK5</accession>
<comment type="function">
    <text evidence="1">Negatively regulates transcription of bacterial ribonucleotide reductase nrd genes and operons by binding to NrdR-boxes.</text>
</comment>
<comment type="cofactor">
    <cofactor evidence="1">
        <name>Zn(2+)</name>
        <dbReference type="ChEBI" id="CHEBI:29105"/>
    </cofactor>
    <text evidence="1">Binds 1 zinc ion.</text>
</comment>
<comment type="similarity">
    <text evidence="1">Belongs to the NrdR family.</text>
</comment>
<evidence type="ECO:0000255" key="1">
    <source>
        <dbReference type="HAMAP-Rule" id="MF_00440"/>
    </source>
</evidence>
<sequence length="155" mass="18364">MYCPFCHAEETKVVDSRLVADGAQVRRRRECLECHERFTTFETAELIMPLIIKRDGRREPFHIDNLRSGMLRALEKRPVSVDDLEKAIISITEEIRRRGEREIDSQVVGELVMKELFRLDHVAYVRFASVYKRFKDVSDFRQTIDQMKNEDKEKS</sequence>
<feature type="chain" id="PRO_0000182311" description="Transcriptional repressor NrdR">
    <location>
        <begin position="1"/>
        <end position="155"/>
    </location>
</feature>
<feature type="domain" description="ATP-cone" evidence="1">
    <location>
        <begin position="49"/>
        <end position="139"/>
    </location>
</feature>
<feature type="zinc finger region" evidence="1">
    <location>
        <begin position="3"/>
        <end position="34"/>
    </location>
</feature>
<keyword id="KW-0067">ATP-binding</keyword>
<keyword id="KW-0238">DNA-binding</keyword>
<keyword id="KW-0479">Metal-binding</keyword>
<keyword id="KW-0547">Nucleotide-binding</keyword>
<keyword id="KW-1185">Reference proteome</keyword>
<keyword id="KW-0678">Repressor</keyword>
<keyword id="KW-0804">Transcription</keyword>
<keyword id="KW-0805">Transcription regulation</keyword>
<keyword id="KW-0862">Zinc</keyword>
<keyword id="KW-0863">Zinc-finger</keyword>
<proteinExistence type="inferred from homology"/>
<gene>
    <name evidence="1" type="primary">nrdR</name>
    <name type="ordered locus">lpg0726</name>
</gene>
<protein>
    <recommendedName>
        <fullName evidence="1">Transcriptional repressor NrdR</fullName>
    </recommendedName>
</protein>
<name>NRDR_LEGPH</name>
<dbReference type="EMBL" id="AE017354">
    <property type="protein sequence ID" value="AAU26815.1"/>
    <property type="molecule type" value="Genomic_DNA"/>
</dbReference>
<dbReference type="RefSeq" id="WP_010946463.1">
    <property type="nucleotide sequence ID" value="NC_002942.5"/>
</dbReference>
<dbReference type="RefSeq" id="YP_094762.1">
    <property type="nucleotide sequence ID" value="NC_002942.5"/>
</dbReference>
<dbReference type="SMR" id="Q5ZXK5"/>
<dbReference type="STRING" id="272624.lpg0726"/>
<dbReference type="PaxDb" id="272624-lpg0726"/>
<dbReference type="GeneID" id="57034719"/>
<dbReference type="KEGG" id="lpn:lpg0726"/>
<dbReference type="PATRIC" id="fig|272624.6.peg.748"/>
<dbReference type="eggNOG" id="COG1327">
    <property type="taxonomic scope" value="Bacteria"/>
</dbReference>
<dbReference type="HOGENOM" id="CLU_108412_0_0_6"/>
<dbReference type="OrthoDB" id="9807461at2"/>
<dbReference type="Proteomes" id="UP000000609">
    <property type="component" value="Chromosome"/>
</dbReference>
<dbReference type="GO" id="GO:0005524">
    <property type="term" value="F:ATP binding"/>
    <property type="evidence" value="ECO:0007669"/>
    <property type="project" value="UniProtKB-KW"/>
</dbReference>
<dbReference type="GO" id="GO:0003677">
    <property type="term" value="F:DNA binding"/>
    <property type="evidence" value="ECO:0007669"/>
    <property type="project" value="UniProtKB-KW"/>
</dbReference>
<dbReference type="GO" id="GO:0008270">
    <property type="term" value="F:zinc ion binding"/>
    <property type="evidence" value="ECO:0007669"/>
    <property type="project" value="UniProtKB-UniRule"/>
</dbReference>
<dbReference type="GO" id="GO:0045892">
    <property type="term" value="P:negative regulation of DNA-templated transcription"/>
    <property type="evidence" value="ECO:0007669"/>
    <property type="project" value="UniProtKB-UniRule"/>
</dbReference>
<dbReference type="HAMAP" id="MF_00440">
    <property type="entry name" value="NrdR"/>
    <property type="match status" value="1"/>
</dbReference>
<dbReference type="InterPro" id="IPR005144">
    <property type="entry name" value="ATP-cone_dom"/>
</dbReference>
<dbReference type="InterPro" id="IPR055173">
    <property type="entry name" value="NrdR-like_N"/>
</dbReference>
<dbReference type="InterPro" id="IPR003796">
    <property type="entry name" value="RNR_NrdR-like"/>
</dbReference>
<dbReference type="NCBIfam" id="TIGR00244">
    <property type="entry name" value="transcriptional regulator NrdR"/>
    <property type="match status" value="1"/>
</dbReference>
<dbReference type="PANTHER" id="PTHR30455">
    <property type="entry name" value="TRANSCRIPTIONAL REPRESSOR NRDR"/>
    <property type="match status" value="1"/>
</dbReference>
<dbReference type="PANTHER" id="PTHR30455:SF2">
    <property type="entry name" value="TRANSCRIPTIONAL REPRESSOR NRDR"/>
    <property type="match status" value="1"/>
</dbReference>
<dbReference type="Pfam" id="PF03477">
    <property type="entry name" value="ATP-cone"/>
    <property type="match status" value="1"/>
</dbReference>
<dbReference type="Pfam" id="PF22811">
    <property type="entry name" value="Zn_ribbon_NrdR"/>
    <property type="match status" value="1"/>
</dbReference>
<dbReference type="PROSITE" id="PS51161">
    <property type="entry name" value="ATP_CONE"/>
    <property type="match status" value="1"/>
</dbReference>